<comment type="function">
    <text>Implicated in the defense of plants against pathogens.</text>
</comment>
<comment type="catalytic activity">
    <reaction>
        <text>Hydrolysis of (1-&gt;3)-beta-D-glucosidic linkages in (1-&gt;3)-beta-D-glucans.</text>
        <dbReference type="EC" id="3.2.1.39"/>
    </reaction>
</comment>
<comment type="subcellular location">
    <subcellularLocation>
        <location>Secreted</location>
        <location>Extracellular space</location>
    </subcellularLocation>
</comment>
<comment type="developmental stage">
    <text>Maximum expression found during days 4 to 8 and days 8 to 12 after inoculation with an avirulent and a virulent pathogen respectively.</text>
</comment>
<comment type="induction">
    <text>Upon infection by virulent and avirulent races of pathogens, for example fungal pathogen C.fulvum.</text>
</comment>
<comment type="similarity">
    <text evidence="4">Belongs to the glycosyl hydrolase 17 family.</text>
</comment>
<organism>
    <name type="scientific">Solanum lycopersicum</name>
    <name type="common">Tomato</name>
    <name type="synonym">Lycopersicon esculentum</name>
    <dbReference type="NCBI Taxonomy" id="4081"/>
    <lineage>
        <taxon>Eukaryota</taxon>
        <taxon>Viridiplantae</taxon>
        <taxon>Streptophyta</taxon>
        <taxon>Embryophyta</taxon>
        <taxon>Tracheophyta</taxon>
        <taxon>Spermatophyta</taxon>
        <taxon>Magnoliopsida</taxon>
        <taxon>eudicotyledons</taxon>
        <taxon>Gunneridae</taxon>
        <taxon>Pentapetalae</taxon>
        <taxon>asterids</taxon>
        <taxon>lamiids</taxon>
        <taxon>Solanales</taxon>
        <taxon>Solanaceae</taxon>
        <taxon>Solanoideae</taxon>
        <taxon>Solaneae</taxon>
        <taxon>Solanum</taxon>
        <taxon>Solanum subgen. Lycopersicon</taxon>
    </lineage>
</organism>
<evidence type="ECO:0000250" key="1"/>
<evidence type="ECO:0000250" key="2">
    <source>
        <dbReference type="UniProtKB" id="O22317"/>
    </source>
</evidence>
<evidence type="ECO:0000250" key="3">
    <source>
        <dbReference type="UniProtKB" id="P15797"/>
    </source>
</evidence>
<evidence type="ECO:0000305" key="4"/>
<feature type="signal peptide" evidence="1">
    <location>
        <begin position="1"/>
        <end position="23"/>
    </location>
</feature>
<feature type="chain" id="PRO_0000011851" description="Glucan endo-1,3-beta-glucosidase A">
    <location>
        <begin position="24"/>
        <end position="336"/>
    </location>
</feature>
<feature type="active site" description="Proton donor" evidence="2">
    <location>
        <position position="118"/>
    </location>
</feature>
<feature type="active site" description="Nucleophile" evidence="2">
    <location>
        <position position="257"/>
    </location>
</feature>
<feature type="modified residue" description="Pyrrolidone carboxylic acid" evidence="3">
    <location>
        <position position="24"/>
    </location>
</feature>
<name>E13A_SOLLC</name>
<reference key="1">
    <citation type="journal article" date="1992" name="Plant Mol. Biol.">
        <title>Differential accumulation of mRNAs encoding extracellular and intracellular PR proteins in tomato induced by virulent and avirulent races of Cladosporium fulvum.</title>
        <authorList>
            <person name="van Kan J.A.L."/>
            <person name="Joosten M.H.A.J."/>
            <person name="Wagemakers C.A.M."/>
            <person name="van den Berg-Velthuis G.C.M."/>
            <person name="de Wit P.J.G.M."/>
        </authorList>
    </citation>
    <scope>NUCLEOTIDE SEQUENCE [MRNA]</scope>
    <scope>PROTEIN SEQUENCE OF 312-330</scope>
    <source>
        <strain>cv. Moneymaker</strain>
        <tissue>Leaf</tissue>
    </source>
</reference>
<accession>Q01412</accession>
<proteinExistence type="evidence at protein level"/>
<keyword id="KW-0903">Direct protein sequencing</keyword>
<keyword id="KW-0326">Glycosidase</keyword>
<keyword id="KW-0378">Hydrolase</keyword>
<keyword id="KW-0611">Plant defense</keyword>
<keyword id="KW-0873">Pyrrolidone carboxylic acid</keyword>
<keyword id="KW-1185">Reference proteome</keyword>
<keyword id="KW-0964">Secreted</keyword>
<keyword id="KW-0732">Signal</keyword>
<protein>
    <recommendedName>
        <fullName>Glucan endo-1,3-beta-glucosidase A</fullName>
        <ecNumber>3.2.1.39</ecNumber>
    </recommendedName>
    <alternativeName>
        <fullName>(1-&gt;3)-beta-glucan endohydrolase A</fullName>
        <shortName>(1-&gt;3)-beta-glucanase A</shortName>
    </alternativeName>
    <alternativeName>
        <fullName>Acidic beta-1,3-glucanase</fullName>
    </alternativeName>
    <alternativeName>
        <fullName>Beta-1,3-endoglucanase A</fullName>
    </alternativeName>
</protein>
<sequence length="336" mass="37572">MAFLSSLLASLLLVGLLIQITGAQPIGVCYGKIANNLPSDQDVIKLYNSNNIKKMRIYFPETNVFNALKGSNIEIILDVPNQDLEALANPSKRQGWVQDNIRNHFPDVKFKYIAVGNEVDPGRDSGKYARFVGPAMENIYNALSSAGLQNQIKVSTATYLGLLTNTYPPRDSIFRDEYKSFINPIIGFLSRHNLPLLANIYPYFGHADDNVPLPYALFKQQGLNDAGYQNLFDALVDSMYFATEKLGGQNIEIIVSESGWPSEGHPSATLENAMTYYTNLINHVKGGAGTPKKPGRTIETYLFAMFDENRKDGKPSEQHFGLFKPDQRPKYQLKFD</sequence>
<dbReference type="EC" id="3.2.1.39"/>
<dbReference type="EMBL" id="M80604">
    <property type="protein sequence ID" value="AAA03617.1"/>
    <property type="molecule type" value="mRNA"/>
</dbReference>
<dbReference type="PIR" id="S26240">
    <property type="entry name" value="S26240"/>
</dbReference>
<dbReference type="RefSeq" id="NP_001234798.2">
    <property type="nucleotide sequence ID" value="NM_001247869.2"/>
</dbReference>
<dbReference type="SMR" id="Q01412"/>
<dbReference type="STRING" id="4081.Q01412"/>
<dbReference type="Allergome" id="2549">
    <property type="allergen name" value="Sola l Glucanase"/>
</dbReference>
<dbReference type="CAZy" id="GH17">
    <property type="family name" value="Glycoside Hydrolase Family 17"/>
</dbReference>
<dbReference type="PaxDb" id="4081-Solyc01g008620.2.1"/>
<dbReference type="GeneID" id="543986"/>
<dbReference type="KEGG" id="sly:543986"/>
<dbReference type="eggNOG" id="ENOG502RRK1">
    <property type="taxonomic scope" value="Eukaryota"/>
</dbReference>
<dbReference type="InParanoid" id="Q01412"/>
<dbReference type="OrthoDB" id="941679at2759"/>
<dbReference type="Proteomes" id="UP000004994">
    <property type="component" value="Unplaced"/>
</dbReference>
<dbReference type="ExpressionAtlas" id="Q01412">
    <property type="expression patterns" value="baseline and differential"/>
</dbReference>
<dbReference type="GO" id="GO:0005576">
    <property type="term" value="C:extracellular region"/>
    <property type="evidence" value="ECO:0007669"/>
    <property type="project" value="UniProtKB-SubCell"/>
</dbReference>
<dbReference type="GO" id="GO:0042973">
    <property type="term" value="F:glucan endo-1,3-beta-D-glucosidase activity"/>
    <property type="evidence" value="ECO:0007669"/>
    <property type="project" value="UniProtKB-EC"/>
</dbReference>
<dbReference type="GO" id="GO:0005975">
    <property type="term" value="P:carbohydrate metabolic process"/>
    <property type="evidence" value="ECO:0007669"/>
    <property type="project" value="InterPro"/>
</dbReference>
<dbReference type="GO" id="GO:0006952">
    <property type="term" value="P:defense response"/>
    <property type="evidence" value="ECO:0007669"/>
    <property type="project" value="UniProtKB-KW"/>
</dbReference>
<dbReference type="FunFam" id="3.20.20.80:FF:000010">
    <property type="entry name" value="glucan endo-1,3-beta-glucosidase, basic"/>
    <property type="match status" value="1"/>
</dbReference>
<dbReference type="Gene3D" id="3.20.20.80">
    <property type="entry name" value="Glycosidases"/>
    <property type="match status" value="1"/>
</dbReference>
<dbReference type="InterPro" id="IPR000490">
    <property type="entry name" value="Glyco_hydro_17"/>
</dbReference>
<dbReference type="InterPro" id="IPR044965">
    <property type="entry name" value="Glyco_hydro_17_plant"/>
</dbReference>
<dbReference type="InterPro" id="IPR017853">
    <property type="entry name" value="Glycoside_hydrolase_SF"/>
</dbReference>
<dbReference type="PANTHER" id="PTHR32227">
    <property type="entry name" value="GLUCAN ENDO-1,3-BETA-GLUCOSIDASE BG1-RELATED-RELATED"/>
    <property type="match status" value="1"/>
</dbReference>
<dbReference type="Pfam" id="PF00332">
    <property type="entry name" value="Glyco_hydro_17"/>
    <property type="match status" value="1"/>
</dbReference>
<dbReference type="SUPFAM" id="SSF51445">
    <property type="entry name" value="(Trans)glycosidases"/>
    <property type="match status" value="1"/>
</dbReference>
<dbReference type="PROSITE" id="PS00587">
    <property type="entry name" value="GLYCOSYL_HYDROL_F17"/>
    <property type="match status" value="1"/>
</dbReference>